<evidence type="ECO:0000250" key="1"/>
<evidence type="ECO:0000305" key="2"/>
<gene>
    <name type="primary">CYP2B11</name>
</gene>
<name>CP2BB_CANLF</name>
<dbReference type="EC" id="1.14.14.1"/>
<dbReference type="EMBL" id="M92447">
    <property type="protein sequence ID" value="AAA30881.1"/>
    <property type="molecule type" value="mRNA"/>
</dbReference>
<dbReference type="PIR" id="S11305">
    <property type="entry name" value="S11305"/>
</dbReference>
<dbReference type="RefSeq" id="NP_001006653.1">
    <property type="nucleotide sequence ID" value="NM_001006652.1"/>
</dbReference>
<dbReference type="SMR" id="P24460"/>
<dbReference type="FunCoup" id="P24460">
    <property type="interactions" value="55"/>
</dbReference>
<dbReference type="STRING" id="9615.ENSCAFP00000032358"/>
<dbReference type="BindingDB" id="P24460"/>
<dbReference type="ChEMBL" id="CHEMBL1907981"/>
<dbReference type="PaxDb" id="9612-ENSCAFP00000032358"/>
<dbReference type="GeneID" id="474177"/>
<dbReference type="KEGG" id="cfa:474177"/>
<dbReference type="CTD" id="1555"/>
<dbReference type="eggNOG" id="KOG0156">
    <property type="taxonomic scope" value="Eukaryota"/>
</dbReference>
<dbReference type="InParanoid" id="P24460"/>
<dbReference type="OrthoDB" id="1055148at2759"/>
<dbReference type="SABIO-RK" id="P24460"/>
<dbReference type="PRO" id="PR:P24460"/>
<dbReference type="Proteomes" id="UP000002254">
    <property type="component" value="Unplaced"/>
</dbReference>
<dbReference type="Proteomes" id="UP000694429">
    <property type="component" value="Unplaced"/>
</dbReference>
<dbReference type="Proteomes" id="UP000694542">
    <property type="component" value="Unplaced"/>
</dbReference>
<dbReference type="Proteomes" id="UP000805418">
    <property type="component" value="Unplaced"/>
</dbReference>
<dbReference type="GO" id="GO:0005737">
    <property type="term" value="C:cytoplasm"/>
    <property type="evidence" value="ECO:0000318"/>
    <property type="project" value="GO_Central"/>
</dbReference>
<dbReference type="GO" id="GO:0005789">
    <property type="term" value="C:endoplasmic reticulum membrane"/>
    <property type="evidence" value="ECO:0007669"/>
    <property type="project" value="UniProtKB-SubCell"/>
</dbReference>
<dbReference type="GO" id="GO:0043231">
    <property type="term" value="C:intracellular membrane-bounded organelle"/>
    <property type="evidence" value="ECO:0000318"/>
    <property type="project" value="GO_Central"/>
</dbReference>
<dbReference type="GO" id="GO:0008392">
    <property type="term" value="F:arachidonate epoxygenase activity"/>
    <property type="evidence" value="ECO:0000318"/>
    <property type="project" value="GO_Central"/>
</dbReference>
<dbReference type="GO" id="GO:0020037">
    <property type="term" value="F:heme binding"/>
    <property type="evidence" value="ECO:0000318"/>
    <property type="project" value="GO_Central"/>
</dbReference>
<dbReference type="GO" id="GO:0005506">
    <property type="term" value="F:iron ion binding"/>
    <property type="evidence" value="ECO:0007669"/>
    <property type="project" value="InterPro"/>
</dbReference>
<dbReference type="GO" id="GO:0016712">
    <property type="term" value="F:oxidoreductase activity, acting on paired donors, with incorporation or reduction of molecular oxygen, reduced flavin or flavoprotein as one donor, and incorporation of one atom of oxygen"/>
    <property type="evidence" value="ECO:0000318"/>
    <property type="project" value="GO_Central"/>
</dbReference>
<dbReference type="GO" id="GO:0019373">
    <property type="term" value="P:epoxygenase P450 pathway"/>
    <property type="evidence" value="ECO:0000318"/>
    <property type="project" value="GO_Central"/>
</dbReference>
<dbReference type="GO" id="GO:0006805">
    <property type="term" value="P:xenobiotic metabolic process"/>
    <property type="evidence" value="ECO:0000318"/>
    <property type="project" value="GO_Central"/>
</dbReference>
<dbReference type="CDD" id="cd20672">
    <property type="entry name" value="CYP2B"/>
    <property type="match status" value="1"/>
</dbReference>
<dbReference type="FunFam" id="1.10.630.10:FF:000001">
    <property type="entry name" value="Cytochrome P450, family 2"/>
    <property type="match status" value="1"/>
</dbReference>
<dbReference type="Gene3D" id="1.10.630.10">
    <property type="entry name" value="Cytochrome P450"/>
    <property type="match status" value="1"/>
</dbReference>
<dbReference type="InterPro" id="IPR001128">
    <property type="entry name" value="Cyt_P450"/>
</dbReference>
<dbReference type="InterPro" id="IPR017972">
    <property type="entry name" value="Cyt_P450_CS"/>
</dbReference>
<dbReference type="InterPro" id="IPR002401">
    <property type="entry name" value="Cyt_P450_E_grp-I"/>
</dbReference>
<dbReference type="InterPro" id="IPR008068">
    <property type="entry name" value="Cyt_P450_E_grp-I_CYP2B-like"/>
</dbReference>
<dbReference type="InterPro" id="IPR036396">
    <property type="entry name" value="Cyt_P450_sf"/>
</dbReference>
<dbReference type="InterPro" id="IPR050182">
    <property type="entry name" value="Cytochrome_P450_fam2"/>
</dbReference>
<dbReference type="PANTHER" id="PTHR24300:SF406">
    <property type="entry name" value="CYTOCHROME P450 2B6"/>
    <property type="match status" value="1"/>
</dbReference>
<dbReference type="PANTHER" id="PTHR24300">
    <property type="entry name" value="CYTOCHROME P450 508A4-RELATED"/>
    <property type="match status" value="1"/>
</dbReference>
<dbReference type="Pfam" id="PF00067">
    <property type="entry name" value="p450"/>
    <property type="match status" value="1"/>
</dbReference>
<dbReference type="PRINTS" id="PR00463">
    <property type="entry name" value="EP450I"/>
</dbReference>
<dbReference type="PRINTS" id="PR01685">
    <property type="entry name" value="EP450ICYP2B"/>
</dbReference>
<dbReference type="PRINTS" id="PR00385">
    <property type="entry name" value="P450"/>
</dbReference>
<dbReference type="SUPFAM" id="SSF48264">
    <property type="entry name" value="Cytochrome P450"/>
    <property type="match status" value="1"/>
</dbReference>
<dbReference type="PROSITE" id="PS00086">
    <property type="entry name" value="CYTOCHROME_P450"/>
    <property type="match status" value="1"/>
</dbReference>
<reference key="1">
    <citation type="journal article" date="1990" name="Arch. Biochem. Biophys.">
        <title>cDNA and deduced amino acid sequences of a dog hepatic cytochrome P450IIB responsible for the metabolism of 2,2',4,4',5,5'-hexachlorobiphenyl.</title>
        <authorList>
            <person name="Graves P.E."/>
            <person name="Elhag G.A."/>
            <person name="Ciaccio P.J."/>
            <person name="Bourque D.P."/>
            <person name="Halpert J.R."/>
        </authorList>
    </citation>
    <scope>NUCLEOTIDE SEQUENCE [MRNA]</scope>
    <source>
        <strain>Beagle</strain>
        <tissue>Liver</tissue>
    </source>
</reference>
<comment type="function">
    <text>Cytochromes P450 are a group of heme-thiolate monooxygenases. In liver microsomes, this enzyme is involved in an NADPH-dependent electron transport pathway. This isozyme seems responsible for metabolism of 2,2',4,4',5,5'-hexachlorobiphenyl.</text>
</comment>
<comment type="catalytic activity">
    <reaction>
        <text>an organic molecule + reduced [NADPH--hemoprotein reductase] + O2 = an alcohol + oxidized [NADPH--hemoprotein reductase] + H2O + H(+)</text>
        <dbReference type="Rhea" id="RHEA:17149"/>
        <dbReference type="Rhea" id="RHEA-COMP:11964"/>
        <dbReference type="Rhea" id="RHEA-COMP:11965"/>
        <dbReference type="ChEBI" id="CHEBI:15377"/>
        <dbReference type="ChEBI" id="CHEBI:15378"/>
        <dbReference type="ChEBI" id="CHEBI:15379"/>
        <dbReference type="ChEBI" id="CHEBI:30879"/>
        <dbReference type="ChEBI" id="CHEBI:57618"/>
        <dbReference type="ChEBI" id="CHEBI:58210"/>
        <dbReference type="ChEBI" id="CHEBI:142491"/>
        <dbReference type="EC" id="1.14.14.1"/>
    </reaction>
</comment>
<comment type="cofactor">
    <cofactor evidence="1">
        <name>heme</name>
        <dbReference type="ChEBI" id="CHEBI:30413"/>
    </cofactor>
</comment>
<comment type="subcellular location">
    <subcellularLocation>
        <location>Endoplasmic reticulum membrane</location>
        <topology>Peripheral membrane protein</topology>
    </subcellularLocation>
    <subcellularLocation>
        <location>Microsome membrane</location>
        <topology>Peripheral membrane protein</topology>
    </subcellularLocation>
</comment>
<comment type="induction">
    <text>By phenobarbital.</text>
</comment>
<comment type="similarity">
    <text evidence="2">Belongs to the cytochrome P450 family.</text>
</comment>
<keyword id="KW-0256">Endoplasmic reticulum</keyword>
<keyword id="KW-0349">Heme</keyword>
<keyword id="KW-0408">Iron</keyword>
<keyword id="KW-0472">Membrane</keyword>
<keyword id="KW-0479">Metal-binding</keyword>
<keyword id="KW-0492">Microsome</keyword>
<keyword id="KW-0503">Monooxygenase</keyword>
<keyword id="KW-0560">Oxidoreductase</keyword>
<keyword id="KW-0597">Phosphoprotein</keyword>
<keyword id="KW-1185">Reference proteome</keyword>
<feature type="chain" id="PRO_0000051686" description="Cytochrome P450 2B11">
    <location>
        <begin position="1"/>
        <end position="494"/>
    </location>
</feature>
<feature type="binding site" description="axial binding residue" evidence="1">
    <location>
        <position position="436"/>
    </location>
    <ligand>
        <name>heme</name>
        <dbReference type="ChEBI" id="CHEBI:30413"/>
    </ligand>
    <ligandPart>
        <name>Fe</name>
        <dbReference type="ChEBI" id="CHEBI:18248"/>
    </ligandPart>
</feature>
<feature type="modified residue" description="Phosphoserine; by PKA" evidence="1">
    <location>
        <position position="128"/>
    </location>
</feature>
<organism>
    <name type="scientific">Canis lupus familiaris</name>
    <name type="common">Dog</name>
    <name type="synonym">Canis familiaris</name>
    <dbReference type="NCBI Taxonomy" id="9615"/>
    <lineage>
        <taxon>Eukaryota</taxon>
        <taxon>Metazoa</taxon>
        <taxon>Chordata</taxon>
        <taxon>Craniata</taxon>
        <taxon>Vertebrata</taxon>
        <taxon>Euteleostomi</taxon>
        <taxon>Mammalia</taxon>
        <taxon>Eutheria</taxon>
        <taxon>Laurasiatheria</taxon>
        <taxon>Carnivora</taxon>
        <taxon>Caniformia</taxon>
        <taxon>Canidae</taxon>
        <taxon>Canis</taxon>
    </lineage>
</organism>
<proteinExistence type="evidence at transcript level"/>
<accession>P24460</accession>
<sequence>MELSVLLLLALLTGLLLLMARGHPKAYGHLPPGPRPLPILGNFLQMDRKGLLKSFLRLQEKYGDVFTVYLGPRRTVMLCGIDAIREALVDNAEAFSGRGKIAVVEPVFQGYGVVFANGERWKTLRRFSLATMRDFGMGKRSVEERIQEEAQCLVEELRKTEGVLQDPTFFFHSMTANIICSIVFGKRFGYKDPEFLRLMNLFYVSFALISSFSSQMFELFHSFLKYFPGTHRQVYNNLQEIKAFIARMVEKHRETLDPSAPRDFIDAYLIRMDKEKAEPSSEFHHRNLIDTALSLFFAGTETTSTTLRYGFLLMLKYPHIAERIYKEIDQVIGPHRLPSLDDRAKMPYTDAVIHEIQRFGDLLPIGVPHMVTKDICFRGYIIPKGTEVFPILHSALNDPHYFEKPDVFNPDHFLDANGALKKNEAFIPFSIGKRICLGEGIARMELFLFFTTILQNFSVASPMAPEDIDLTPQEIGVGKLPPVYQISFLSRGGC</sequence>
<protein>
    <recommendedName>
        <fullName>Cytochrome P450 2B11</fullName>
        <ecNumber>1.14.14.1</ecNumber>
    </recommendedName>
    <alternativeName>
        <fullName>CYPIIB11</fullName>
    </alternativeName>
    <alternativeName>
        <fullName>Cytochrome P450 PBD-2</fullName>
    </alternativeName>
</protein>